<comment type="catalytic activity">
    <reaction evidence="1">
        <text>beta-D-fructose 1,6-bisphosphate + H2O = beta-D-fructose 6-phosphate + phosphate</text>
        <dbReference type="Rhea" id="RHEA:11064"/>
        <dbReference type="ChEBI" id="CHEBI:15377"/>
        <dbReference type="ChEBI" id="CHEBI:32966"/>
        <dbReference type="ChEBI" id="CHEBI:43474"/>
        <dbReference type="ChEBI" id="CHEBI:57634"/>
        <dbReference type="EC" id="3.1.3.11"/>
    </reaction>
</comment>
<comment type="cofactor">
    <cofactor evidence="1">
        <name>Mg(2+)</name>
        <dbReference type="ChEBI" id="CHEBI:18420"/>
    </cofactor>
    <text evidence="1">Binds 2 magnesium ions per subunit.</text>
</comment>
<comment type="pathway">
    <text evidence="1">Carbohydrate biosynthesis; gluconeogenesis.</text>
</comment>
<comment type="subunit">
    <text evidence="1">Homotetramer.</text>
</comment>
<comment type="subcellular location">
    <subcellularLocation>
        <location evidence="1">Cytoplasm</location>
    </subcellularLocation>
</comment>
<comment type="similarity">
    <text evidence="1">Belongs to the FBPase class 1 family.</text>
</comment>
<reference key="1">
    <citation type="journal article" date="2010" name="PLoS Genet.">
        <title>Genome sequence of the plant growth promoting endophytic bacterium Enterobacter sp. 638.</title>
        <authorList>
            <person name="Taghavi S."/>
            <person name="van der Lelie D."/>
            <person name="Hoffman A."/>
            <person name="Zhang Y.B."/>
            <person name="Walla M.D."/>
            <person name="Vangronsveld J."/>
            <person name="Newman L."/>
            <person name="Monchy S."/>
        </authorList>
    </citation>
    <scope>NUCLEOTIDE SEQUENCE [LARGE SCALE GENOMIC DNA]</scope>
    <source>
        <strain>638</strain>
    </source>
</reference>
<dbReference type="EC" id="3.1.3.11" evidence="1"/>
<dbReference type="EMBL" id="CP000653">
    <property type="protein sequence ID" value="ABP59106.1"/>
    <property type="molecule type" value="Genomic_DNA"/>
</dbReference>
<dbReference type="RefSeq" id="WP_012015831.1">
    <property type="nucleotide sequence ID" value="NC_009436.1"/>
</dbReference>
<dbReference type="SMR" id="A4W5X6"/>
<dbReference type="STRING" id="399742.Ent638_0418"/>
<dbReference type="KEGG" id="ent:Ent638_0418"/>
<dbReference type="eggNOG" id="COG0158">
    <property type="taxonomic scope" value="Bacteria"/>
</dbReference>
<dbReference type="HOGENOM" id="CLU_039977_2_2_6"/>
<dbReference type="OrthoDB" id="9806756at2"/>
<dbReference type="UniPathway" id="UPA00138"/>
<dbReference type="Proteomes" id="UP000000230">
    <property type="component" value="Chromosome"/>
</dbReference>
<dbReference type="GO" id="GO:0005829">
    <property type="term" value="C:cytosol"/>
    <property type="evidence" value="ECO:0007669"/>
    <property type="project" value="TreeGrafter"/>
</dbReference>
<dbReference type="GO" id="GO:0042132">
    <property type="term" value="F:fructose 1,6-bisphosphate 1-phosphatase activity"/>
    <property type="evidence" value="ECO:0007669"/>
    <property type="project" value="UniProtKB-UniRule"/>
</dbReference>
<dbReference type="GO" id="GO:0000287">
    <property type="term" value="F:magnesium ion binding"/>
    <property type="evidence" value="ECO:0007669"/>
    <property type="project" value="UniProtKB-UniRule"/>
</dbReference>
<dbReference type="GO" id="GO:0030388">
    <property type="term" value="P:fructose 1,6-bisphosphate metabolic process"/>
    <property type="evidence" value="ECO:0007669"/>
    <property type="project" value="TreeGrafter"/>
</dbReference>
<dbReference type="GO" id="GO:0006002">
    <property type="term" value="P:fructose 6-phosphate metabolic process"/>
    <property type="evidence" value="ECO:0007669"/>
    <property type="project" value="TreeGrafter"/>
</dbReference>
<dbReference type="GO" id="GO:0006000">
    <property type="term" value="P:fructose metabolic process"/>
    <property type="evidence" value="ECO:0007669"/>
    <property type="project" value="TreeGrafter"/>
</dbReference>
<dbReference type="GO" id="GO:0006094">
    <property type="term" value="P:gluconeogenesis"/>
    <property type="evidence" value="ECO:0007669"/>
    <property type="project" value="UniProtKB-UniRule"/>
</dbReference>
<dbReference type="GO" id="GO:0005986">
    <property type="term" value="P:sucrose biosynthetic process"/>
    <property type="evidence" value="ECO:0007669"/>
    <property type="project" value="TreeGrafter"/>
</dbReference>
<dbReference type="CDD" id="cd00354">
    <property type="entry name" value="FBPase"/>
    <property type="match status" value="1"/>
</dbReference>
<dbReference type="FunFam" id="3.30.540.10:FF:000002">
    <property type="entry name" value="Fructose-1,6-bisphosphatase class 1"/>
    <property type="match status" value="1"/>
</dbReference>
<dbReference type="FunFam" id="3.40.190.80:FF:000001">
    <property type="entry name" value="Fructose-1,6-bisphosphatase class 1"/>
    <property type="match status" value="1"/>
</dbReference>
<dbReference type="Gene3D" id="3.40.190.80">
    <property type="match status" value="1"/>
</dbReference>
<dbReference type="Gene3D" id="3.30.540.10">
    <property type="entry name" value="Fructose-1,6-Bisphosphatase, subunit A, domain 1"/>
    <property type="match status" value="1"/>
</dbReference>
<dbReference type="HAMAP" id="MF_01855">
    <property type="entry name" value="FBPase_class1"/>
    <property type="match status" value="1"/>
</dbReference>
<dbReference type="InterPro" id="IPR044015">
    <property type="entry name" value="FBPase_C_dom"/>
</dbReference>
<dbReference type="InterPro" id="IPR000146">
    <property type="entry name" value="FBPase_class-1"/>
</dbReference>
<dbReference type="InterPro" id="IPR033391">
    <property type="entry name" value="FBPase_N"/>
</dbReference>
<dbReference type="InterPro" id="IPR028343">
    <property type="entry name" value="FBPtase"/>
</dbReference>
<dbReference type="InterPro" id="IPR020548">
    <property type="entry name" value="Fructose_bisphosphatase_AS"/>
</dbReference>
<dbReference type="NCBIfam" id="NF006778">
    <property type="entry name" value="PRK09293.1-1"/>
    <property type="match status" value="1"/>
</dbReference>
<dbReference type="NCBIfam" id="NF006779">
    <property type="entry name" value="PRK09293.1-3"/>
    <property type="match status" value="1"/>
</dbReference>
<dbReference type="PANTHER" id="PTHR11556">
    <property type="entry name" value="FRUCTOSE-1,6-BISPHOSPHATASE-RELATED"/>
    <property type="match status" value="1"/>
</dbReference>
<dbReference type="PANTHER" id="PTHR11556:SF35">
    <property type="entry name" value="SEDOHEPTULOSE-1,7-BISPHOSPHATASE, CHLOROPLASTIC"/>
    <property type="match status" value="1"/>
</dbReference>
<dbReference type="Pfam" id="PF00316">
    <property type="entry name" value="FBPase"/>
    <property type="match status" value="1"/>
</dbReference>
<dbReference type="Pfam" id="PF18913">
    <property type="entry name" value="FBPase_C"/>
    <property type="match status" value="1"/>
</dbReference>
<dbReference type="PIRSF" id="PIRSF500210">
    <property type="entry name" value="FBPtase"/>
    <property type="match status" value="1"/>
</dbReference>
<dbReference type="PIRSF" id="PIRSF000904">
    <property type="entry name" value="FBPtase_SBPase"/>
    <property type="match status" value="1"/>
</dbReference>
<dbReference type="PRINTS" id="PR00115">
    <property type="entry name" value="F16BPHPHTASE"/>
</dbReference>
<dbReference type="SUPFAM" id="SSF56655">
    <property type="entry name" value="Carbohydrate phosphatase"/>
    <property type="match status" value="1"/>
</dbReference>
<dbReference type="PROSITE" id="PS00124">
    <property type="entry name" value="FBPASE"/>
    <property type="match status" value="1"/>
</dbReference>
<proteinExistence type="inferred from homology"/>
<protein>
    <recommendedName>
        <fullName evidence="1">Fructose-1,6-bisphosphatase class 1</fullName>
        <shortName evidence="1">FBPase class 1</shortName>
        <ecNumber evidence="1">3.1.3.11</ecNumber>
    </recommendedName>
    <alternativeName>
        <fullName evidence="1">D-fructose-1,6-bisphosphate 1-phosphohydrolase class 1</fullName>
    </alternativeName>
</protein>
<gene>
    <name evidence="1" type="primary">fbp</name>
    <name type="ordered locus">Ent638_0418</name>
</gene>
<organism>
    <name type="scientific">Enterobacter sp. (strain 638)</name>
    <dbReference type="NCBI Taxonomy" id="399742"/>
    <lineage>
        <taxon>Bacteria</taxon>
        <taxon>Pseudomonadati</taxon>
        <taxon>Pseudomonadota</taxon>
        <taxon>Gammaproteobacteria</taxon>
        <taxon>Enterobacterales</taxon>
        <taxon>Enterobacteriaceae</taxon>
        <taxon>Enterobacter</taxon>
    </lineage>
</organism>
<accession>A4W5X6</accession>
<feature type="chain" id="PRO_0000364542" description="Fructose-1,6-bisphosphatase class 1">
    <location>
        <begin position="1"/>
        <end position="332"/>
    </location>
</feature>
<feature type="binding site" evidence="1">
    <location>
        <position position="89"/>
    </location>
    <ligand>
        <name>Mg(2+)</name>
        <dbReference type="ChEBI" id="CHEBI:18420"/>
        <label>1</label>
    </ligand>
</feature>
<feature type="binding site" evidence="1">
    <location>
        <position position="110"/>
    </location>
    <ligand>
        <name>Mg(2+)</name>
        <dbReference type="ChEBI" id="CHEBI:18420"/>
        <label>1</label>
    </ligand>
</feature>
<feature type="binding site" evidence="1">
    <location>
        <position position="110"/>
    </location>
    <ligand>
        <name>Mg(2+)</name>
        <dbReference type="ChEBI" id="CHEBI:18420"/>
        <label>2</label>
    </ligand>
</feature>
<feature type="binding site" evidence="1">
    <location>
        <position position="112"/>
    </location>
    <ligand>
        <name>Mg(2+)</name>
        <dbReference type="ChEBI" id="CHEBI:18420"/>
        <label>1</label>
    </ligand>
</feature>
<feature type="binding site" evidence="1">
    <location>
        <begin position="113"/>
        <end position="116"/>
    </location>
    <ligand>
        <name>substrate</name>
    </ligand>
</feature>
<feature type="binding site" evidence="1">
    <location>
        <position position="113"/>
    </location>
    <ligand>
        <name>Mg(2+)</name>
        <dbReference type="ChEBI" id="CHEBI:18420"/>
        <label>2</label>
    </ligand>
</feature>
<feature type="binding site" evidence="1">
    <location>
        <position position="206"/>
    </location>
    <ligand>
        <name>substrate</name>
    </ligand>
</feature>
<feature type="binding site" evidence="1">
    <location>
        <position position="239"/>
    </location>
    <ligand>
        <name>substrate</name>
    </ligand>
</feature>
<feature type="binding site" evidence="1">
    <location>
        <begin position="257"/>
        <end position="259"/>
    </location>
    <ligand>
        <name>substrate</name>
    </ligand>
</feature>
<feature type="binding site" evidence="1">
    <location>
        <position position="269"/>
    </location>
    <ligand>
        <name>substrate</name>
    </ligand>
</feature>
<feature type="binding site" evidence="1">
    <location>
        <position position="275"/>
    </location>
    <ligand>
        <name>Mg(2+)</name>
        <dbReference type="ChEBI" id="CHEBI:18420"/>
        <label>2</label>
    </ligand>
</feature>
<evidence type="ECO:0000255" key="1">
    <source>
        <dbReference type="HAMAP-Rule" id="MF_01855"/>
    </source>
</evidence>
<keyword id="KW-0119">Carbohydrate metabolism</keyword>
<keyword id="KW-0963">Cytoplasm</keyword>
<keyword id="KW-0378">Hydrolase</keyword>
<keyword id="KW-0460">Magnesium</keyword>
<keyword id="KW-0479">Metal-binding</keyword>
<sequence>MKTLGEFIVEKQHEFSHATGELTALLSAIKLGAKIIHRDINKAGLVDILGASGAENVQGEVQQKLDLFANEKLKAALRARDIVAGIASEEEDEIVVFEGCEHAKYVVLMDPLDGSSNIDVNVSVGTIFSIYRRVTPVGTAVTEEDFLQPGNKQVAAGYVVYGSSTMLVYTTGCGVHAFTYDPSLGVFCLCQERMRYPEKGSTYSINEGNYIKFPNGVKKYIKFCQEEDTPTQRPYTSRYIGSLVADFHRNLLKGGIYLYPSTASHPDGKLRLLYECNPMAFLAEQAGGKASDGKERILDITPESLHQRRSFFVGNNHMVEDVERLIREYPDA</sequence>
<name>F16PA_ENT38</name>